<protein>
    <recommendedName>
        <fullName evidence="5">S-adenosylmethionine-dependent nucleotide dehydratase</fullName>
        <shortName evidence="5">SAND</shortName>
        <ecNumber evidence="7">4.2.-.-</ecNumber>
    </recommendedName>
    <alternativeName>
        <fullName evidence="4">Prokaryotic viperin protein pVip47</fullName>
        <shortName evidence="4">pVip47</shortName>
    </alternativeName>
</protein>
<dbReference type="EC" id="4.2.-.-" evidence="7"/>
<dbReference type="EMBL" id="JRYR02000002">
    <property type="protein sequence ID" value="OHX64776.1"/>
    <property type="status" value="ALT_INIT"/>
    <property type="molecule type" value="Genomic_DNA"/>
</dbReference>
<dbReference type="RefSeq" id="WP_158021996.1">
    <property type="nucleotide sequence ID" value="NZ_JRYR02000002.1"/>
</dbReference>
<dbReference type="SMR" id="A0A1S1YUU1"/>
<dbReference type="STRING" id="915059.NH26_21195"/>
<dbReference type="OrthoDB" id="9808591at2"/>
<dbReference type="Proteomes" id="UP000179797">
    <property type="component" value="Unassembled WGS sequence"/>
</dbReference>
<dbReference type="GO" id="GO:0051539">
    <property type="term" value="F:4 iron, 4 sulfur cluster binding"/>
    <property type="evidence" value="ECO:0007669"/>
    <property type="project" value="UniProtKB-KW"/>
</dbReference>
<dbReference type="GO" id="GO:0016829">
    <property type="term" value="F:lyase activity"/>
    <property type="evidence" value="ECO:0007669"/>
    <property type="project" value="UniProtKB-KW"/>
</dbReference>
<dbReference type="GO" id="GO:0046872">
    <property type="term" value="F:metal ion binding"/>
    <property type="evidence" value="ECO:0007669"/>
    <property type="project" value="UniProtKB-KW"/>
</dbReference>
<dbReference type="GO" id="GO:0051607">
    <property type="term" value="P:defense response to virus"/>
    <property type="evidence" value="ECO:0007669"/>
    <property type="project" value="UniProtKB-KW"/>
</dbReference>
<dbReference type="CDD" id="cd01335">
    <property type="entry name" value="Radical_SAM"/>
    <property type="match status" value="1"/>
</dbReference>
<dbReference type="Gene3D" id="3.20.20.70">
    <property type="entry name" value="Aldolase class I"/>
    <property type="match status" value="1"/>
</dbReference>
<dbReference type="InterPro" id="IPR013785">
    <property type="entry name" value="Aldolase_TIM"/>
</dbReference>
<dbReference type="InterPro" id="IPR006638">
    <property type="entry name" value="Elp3/MiaA/NifB-like_rSAM"/>
</dbReference>
<dbReference type="InterPro" id="IPR051196">
    <property type="entry name" value="RSAD2/Viperin_antiviral"/>
</dbReference>
<dbReference type="InterPro" id="IPR007197">
    <property type="entry name" value="rSAM"/>
</dbReference>
<dbReference type="NCBIfam" id="NF038283">
    <property type="entry name" value="viperin_w_prok"/>
    <property type="match status" value="1"/>
</dbReference>
<dbReference type="PANTHER" id="PTHR21339">
    <property type="entry name" value="RADICAL S-ADENOSYL METHIONINE DOMAIN-CONTAINING PROTEIN 2"/>
    <property type="match status" value="1"/>
</dbReference>
<dbReference type="PANTHER" id="PTHR21339:SF0">
    <property type="entry name" value="S-ADENOSYLMETHIONINE-DEPENDENT NUCLEOTIDE DEHYDRATASE RSAD2"/>
    <property type="match status" value="1"/>
</dbReference>
<dbReference type="Pfam" id="PF13353">
    <property type="entry name" value="Fer4_12"/>
    <property type="match status" value="1"/>
</dbReference>
<dbReference type="Pfam" id="PF04055">
    <property type="entry name" value="Radical_SAM"/>
    <property type="match status" value="1"/>
</dbReference>
<dbReference type="SFLD" id="SFLDG01088">
    <property type="entry name" value="antiviral_proteins"/>
    <property type="match status" value="1"/>
</dbReference>
<dbReference type="SFLD" id="SFLDS00029">
    <property type="entry name" value="Radical_SAM"/>
    <property type="match status" value="1"/>
</dbReference>
<dbReference type="SFLD" id="SFLDG01067">
    <property type="entry name" value="SPASM/twitch_domain_containing"/>
    <property type="match status" value="1"/>
</dbReference>
<dbReference type="SMART" id="SM00729">
    <property type="entry name" value="Elp3"/>
    <property type="match status" value="1"/>
</dbReference>
<dbReference type="SUPFAM" id="SSF102114">
    <property type="entry name" value="Radical SAM enzymes"/>
    <property type="match status" value="1"/>
</dbReference>
<dbReference type="PROSITE" id="PS01305">
    <property type="entry name" value="MOAA_NIFB_PQQE"/>
    <property type="match status" value="1"/>
</dbReference>
<dbReference type="PROSITE" id="PS51918">
    <property type="entry name" value="RADICAL_SAM"/>
    <property type="match status" value="1"/>
</dbReference>
<feature type="chain" id="PRO_0000456421" description="S-adenosylmethionine-dependent nucleotide dehydratase">
    <location>
        <begin position="1"/>
        <end position="290"/>
    </location>
</feature>
<feature type="domain" description="Radical SAM core" evidence="2">
    <location>
        <begin position="6"/>
        <end position="226"/>
    </location>
</feature>
<feature type="binding site" evidence="2">
    <location>
        <position position="22"/>
    </location>
    <ligand>
        <name>[4Fe-4S] cluster</name>
        <dbReference type="ChEBI" id="CHEBI:49883"/>
        <note>4Fe-4S-S-AdoMet</note>
    </ligand>
</feature>
<feature type="binding site" evidence="2">
    <location>
        <position position="26"/>
    </location>
    <ligand>
        <name>[4Fe-4S] cluster</name>
        <dbReference type="ChEBI" id="CHEBI:49883"/>
        <note>4Fe-4S-S-AdoMet</note>
    </ligand>
</feature>
<feature type="binding site" evidence="2">
    <location>
        <position position="29"/>
    </location>
    <ligand>
        <name>[4Fe-4S] cluster</name>
        <dbReference type="ChEBI" id="CHEBI:49883"/>
        <note>4Fe-4S-S-AdoMet</note>
    </ligand>
</feature>
<gene>
    <name evidence="6" type="primary">vip47</name>
    <name type="ORF">Ga0077589_102145</name>
    <name evidence="8" type="ORF">NH26_21195</name>
</gene>
<name>SAND_FLAPC</name>
<comment type="function">
    <text evidence="1 3 7">Expression of pVip47 in E.coli (strain MG1655) confers resistance to phage P1; has no effect against T7. Catalyzes the conversion of uridine triphosphate (UTP) to 3'-deoxy-3',4'-didehydro-UTP (ddhUTP), probably via a SAM-dependent radical mechanism (PubMed:32937646). The modified nucleotide represses transcription from T7 RNA polymerase-directed genes (possibly by acting as chain terminators), strongly suggesting these nucleotides block viral polymerase transcription (By similarity). How this protein allows bacteria to resist viruses that do not encode their own RNA polymerase (such as lambda, P1) is unknown (Probable).</text>
</comment>
<comment type="catalytic activity">
    <reaction evidence="7">
        <text>UTP + AH2 + S-adenosyl-L-methionine = 3'-deoxy-3',4'-didehydro-UTP + 5'-deoxyadenosine + L-methionine + A + H2O + H(+)</text>
        <dbReference type="Rhea" id="RHEA:72147"/>
        <dbReference type="ChEBI" id="CHEBI:13193"/>
        <dbReference type="ChEBI" id="CHEBI:15377"/>
        <dbReference type="ChEBI" id="CHEBI:15378"/>
        <dbReference type="ChEBI" id="CHEBI:17319"/>
        <dbReference type="ChEBI" id="CHEBI:17499"/>
        <dbReference type="ChEBI" id="CHEBI:46398"/>
        <dbReference type="ChEBI" id="CHEBI:57844"/>
        <dbReference type="ChEBI" id="CHEBI:59789"/>
        <dbReference type="ChEBI" id="CHEBI:191858"/>
    </reaction>
</comment>
<comment type="cofactor">
    <cofactor evidence="2">
        <name>[4Fe-4S] cluster</name>
        <dbReference type="ChEBI" id="CHEBI:49883"/>
    </cofactor>
</comment>
<comment type="similarity">
    <text evidence="7">Belongs to the radical SAM superfamily. Viperin family.</text>
</comment>
<comment type="sequence caution" evidence="7">
    <conflict type="erroneous initiation">
        <sequence resource="EMBL-CDS" id="OHX64776"/>
    </conflict>
    <text>Truncated N-terminus.</text>
</comment>
<reference evidence="8" key="1">
    <citation type="journal article" date="2012" name="Int. J. Syst. Evol. Microbiol.">
        <title>Flammeovirga pacifica sp. nov., isolated from deep-sea sediment.</title>
        <authorList>
            <person name="Xu H."/>
            <person name="Fu Y."/>
            <person name="Yang N."/>
            <person name="Ding Z."/>
            <person name="Lai Q."/>
            <person name="Zeng R."/>
        </authorList>
    </citation>
    <scope>NUCLEOTIDE SEQUENCE [LARGE SCALE GENOMIC DNA]</scope>
    <source>
        <strain>DSM 24597 / LMG 26175 / WPAGA1</strain>
    </source>
</reference>
<reference key="2">
    <citation type="journal article" date="2021" name="Nature">
        <title>Prokaryotic viperins produce diverse antiviral molecules.</title>
        <authorList>
            <person name="Bernheim A."/>
            <person name="Millman A."/>
            <person name="Ofir G."/>
            <person name="Meitav G."/>
            <person name="Avraham C."/>
            <person name="Shomar H."/>
            <person name="Rosenberg M.M."/>
            <person name="Tal N."/>
            <person name="Melamed S."/>
            <person name="Amitai G."/>
            <person name="Sorek R."/>
        </authorList>
    </citation>
    <scope>FUNCTION IN ANTIVIRAL DEFENSE</scope>
    <scope>FUNCTION IN DDHUTP SYNTHESIS</scope>
    <scope>PROBABLE CATALYTIC ACTIVITY</scope>
    <source>
        <strain>DSM 24597 / LMG 26175 / WPAGA1</strain>
    </source>
</reference>
<reference key="3">
    <citation type="journal article" date="2022" name="Front. Mol. Biosci.">
        <title>Radical-SAM dependent nucleotide dehydratase (SAND), rectification of the names of an ancient iron-sulfur enzyme using NC-IUBMB recommendations.</title>
        <authorList>
            <person name="Ji Y."/>
            <person name="Wei L."/>
            <person name="Da A."/>
            <person name="Stark H."/>
            <person name="Hagedoorn P.-L."/>
            <person name="Ciofi-Baffoni S."/>
            <person name="Cowley S.A."/>
            <person name="Louro R.O."/>
            <person name="Todorovic S."/>
            <person name="Mroginski M.A."/>
            <person name="Nicolet Y."/>
            <person name="Roessler M.M."/>
            <person name="Le Brun N.E."/>
            <person name="Piccioli M."/>
            <person name="James W.S."/>
            <person name="Hagen W.R."/>
            <person name="Ebrahimi K.H."/>
        </authorList>
    </citation>
    <scope>NOMENCLATURE</scope>
</reference>
<accession>A0A1S1YUU1</accession>
<organism>
    <name type="scientific">Flammeovirga pacifica</name>
    <dbReference type="NCBI Taxonomy" id="915059"/>
    <lineage>
        <taxon>Bacteria</taxon>
        <taxon>Pseudomonadati</taxon>
        <taxon>Bacteroidota</taxon>
        <taxon>Cytophagia</taxon>
        <taxon>Cytophagales</taxon>
        <taxon>Flammeovirgaceae</taxon>
        <taxon>Flammeovirga</taxon>
    </lineage>
</organism>
<evidence type="ECO:0000250" key="1">
    <source>
        <dbReference type="UniProtKB" id="P0DW53"/>
    </source>
</evidence>
<evidence type="ECO:0000255" key="2">
    <source>
        <dbReference type="PROSITE-ProRule" id="PRU01266"/>
    </source>
</evidence>
<evidence type="ECO:0000269" key="3">
    <source>
    </source>
</evidence>
<evidence type="ECO:0000303" key="4">
    <source>
    </source>
</evidence>
<evidence type="ECO:0000303" key="5">
    <source>
    </source>
</evidence>
<evidence type="ECO:0000305" key="6"/>
<evidence type="ECO:0000305" key="7">
    <source>
    </source>
</evidence>
<evidence type="ECO:0000312" key="8">
    <source>
        <dbReference type="EMBL" id="OHX64776.1"/>
    </source>
</evidence>
<keyword id="KW-0004">4Fe-4S</keyword>
<keyword id="KW-0051">Antiviral defense</keyword>
<keyword id="KW-0408">Iron</keyword>
<keyword id="KW-0411">Iron-sulfur</keyword>
<keyword id="KW-0456">Lyase</keyword>
<keyword id="KW-0479">Metal-binding</keyword>
<keyword id="KW-1185">Reference proteome</keyword>
<keyword id="KW-0949">S-adenosyl-L-methionine</keyword>
<sequence length="290" mass="33712">MNKLVSGNNIIPSVNFHLWEPCNMRCKFCFAKFQDVKSTILPKGHLKKEQTLEIVEQLAEYGFQKITFVGGEPTLCPWISELIKKANLLGMTTMIVTNGSNLSKDFLVQNQSYLDWITLSIDSINSSTNKVVGRSTNSIHPDRIYYNQLIQTIYEYGYRLKINTVVTKANLNEDLNDFVNDAKPERWKVFQVLPVRGQNDNDIDELLISEKEFNEYVNRHSKNKFLITETNTDMTNTYVMVDPAGRFFNNQNGNYMYSDHILEVGVQKAFEEMGYNYDKFIDRKGIYQWK</sequence>
<proteinExistence type="evidence at protein level"/>